<evidence type="ECO:0000269" key="1">
    <source>
    </source>
</evidence>
<evidence type="ECO:0000305" key="2"/>
<evidence type="ECO:0000305" key="3">
    <source>
    </source>
</evidence>
<reference key="1">
    <citation type="submission" date="2010-02" db="EMBL/GenBank/DDBJ databases">
        <title>Complete genomic sequence of Lactococcus lactis phage p2.</title>
        <authorList>
            <person name="Tremblay D.M."/>
            <person name="Deveau H."/>
            <person name="Moineau S."/>
        </authorList>
    </citation>
    <scope>NUCLEOTIDE SEQUENCE [LARGE SCALE GENOMIC DNA]</scope>
</reference>
<reference key="2">
    <citation type="journal article" date="2013" name="J. Virol.">
        <title>Structure, adsorption to host, and infection mechanism of virulent lactococcal phage p2.</title>
        <authorList>
            <person name="Bebeacua C."/>
            <person name="Tremblay D."/>
            <person name="Farenc C."/>
            <person name="Chapot-Chartier M.P."/>
            <person name="Sadovskaya I."/>
            <person name="van Heel M."/>
            <person name="Veesler D."/>
            <person name="Moineau S."/>
            <person name="Cambillau C."/>
        </authorList>
    </citation>
    <scope>STRUCTURE BY ELECTRON MICROSCOPY (22 ANGSTROMS) OF THE TAIL</scope>
    <scope>FUNCTION</scope>
    <scope>SUBCELLULAR LOCATION</scope>
    <scope>SUBUNIT</scope>
    <scope>INTERACTION WITH THE TAIL TUBE PROTEIN</scope>
</reference>
<dbReference type="EMBL" id="GQ979703">
    <property type="protein sequence ID" value="ADC80086.1"/>
    <property type="molecule type" value="Genomic_DNA"/>
</dbReference>
<dbReference type="RefSeq" id="YP_009613490.1">
    <property type="nucleotide sequence ID" value="NC_042024.1"/>
</dbReference>
<dbReference type="GeneID" id="40089865"/>
<dbReference type="Proteomes" id="UP000002348">
    <property type="component" value="Segment"/>
</dbReference>
<dbReference type="GO" id="GO:0098015">
    <property type="term" value="C:virus tail"/>
    <property type="evidence" value="ECO:0007669"/>
    <property type="project" value="UniProtKB-KW"/>
</dbReference>
<dbReference type="GO" id="GO:0098003">
    <property type="term" value="P:viral tail assembly"/>
    <property type="evidence" value="ECO:0007669"/>
    <property type="project" value="UniProtKB-KW"/>
</dbReference>
<comment type="function">
    <text evidence="3">Plays an essential role in tail assembly by capping the rapidly polymerizing tail once it has reached its requisite length and serving as the interaction surface for the connector and the tail tube proteins.</text>
</comment>
<comment type="subunit">
    <text evidence="1">Homohexamer. Interacts with the tail tube protein.</text>
</comment>
<comment type="subcellular location">
    <subcellularLocation>
        <location>Virion</location>
    </subcellularLocation>
    <text evidence="1">Located at the interface with the connector and the tail tube.</text>
</comment>
<comment type="similarity">
    <text evidence="2">Belongs to the Skunalikevirus tail terminator protein family.</text>
</comment>
<name>TTTP_BPLP2</name>
<accession>D3WAC9</accession>
<proteinExistence type="evidence at protein level"/>
<keyword id="KW-1188">Viral release from host cell</keyword>
<keyword id="KW-1245">Viral tail assembly</keyword>
<keyword id="KW-1227">Viral tail protein</keyword>
<keyword id="KW-0946">Virion</keyword>
<sequence>MAMNLLNTASIAKEMQTKVTERMGDWFEAEFKAKANSASRRTRLIRSHGHTYTYARYQNTGQLSSNLKQVKKGDKIVIDAGTRANYTSGYHGMYFLVEKKGMQEVKTTLKKGANYANSMKL</sequence>
<organismHost>
    <name type="scientific">Lactococcus lactis</name>
    <dbReference type="NCBI Taxonomy" id="1358"/>
</organismHost>
<feature type="chain" id="PRO_0000438224" description="Probable tail terminator protein">
    <location>
        <begin position="1"/>
        <end position="121"/>
    </location>
</feature>
<organism>
    <name type="scientific">Lactococcus phage p2</name>
    <name type="common">Lactococcus lactis bacteriophage p2</name>
    <dbReference type="NCBI Taxonomy" id="254252"/>
    <lineage>
        <taxon>Viruses</taxon>
        <taxon>Duplodnaviria</taxon>
        <taxon>Heunggongvirae</taxon>
        <taxon>Uroviricota</taxon>
        <taxon>Caudoviricetes</taxon>
        <taxon>Skunavirus</taxon>
    </lineage>
</organism>
<protein>
    <recommendedName>
        <fullName>Probable tail terminator protein</fullName>
    </recommendedName>
    <alternativeName>
        <fullName evidence="2">Gene product 10</fullName>
        <shortName evidence="2">gp10</shortName>
    </alternativeName>
</protein>